<organism evidence="8">
    <name type="scientific">Drosophila melanogaster</name>
    <name type="common">Fruit fly</name>
    <dbReference type="NCBI Taxonomy" id="7227"/>
    <lineage>
        <taxon>Eukaryota</taxon>
        <taxon>Metazoa</taxon>
        <taxon>Ecdysozoa</taxon>
        <taxon>Arthropoda</taxon>
        <taxon>Hexapoda</taxon>
        <taxon>Insecta</taxon>
        <taxon>Pterygota</taxon>
        <taxon>Neoptera</taxon>
        <taxon>Endopterygota</taxon>
        <taxon>Diptera</taxon>
        <taxon>Brachycera</taxon>
        <taxon>Muscomorpha</taxon>
        <taxon>Ephydroidea</taxon>
        <taxon>Drosophilidae</taxon>
        <taxon>Drosophila</taxon>
        <taxon>Sophophora</taxon>
    </lineage>
</organism>
<feature type="chain" id="PRO_0000461917" description="Jumonji C domain-containing protein 5">
    <location>
        <begin position="1"/>
        <end position="401"/>
    </location>
</feature>
<feature type="domain" description="JmjC" evidence="2">
    <location>
        <begin position="255"/>
        <end position="401"/>
    </location>
</feature>
<feature type="binding site" evidence="2">
    <location>
        <position position="306"/>
    </location>
    <ligand>
        <name>Fe cation</name>
        <dbReference type="ChEBI" id="CHEBI:24875"/>
        <note>catalytic</note>
    </ligand>
</feature>
<feature type="binding site" evidence="2">
    <location>
        <position position="308"/>
    </location>
    <ligand>
        <name>Fe cation</name>
        <dbReference type="ChEBI" id="CHEBI:24875"/>
        <note>catalytic</note>
    </ligand>
</feature>
<feature type="binding site" evidence="2">
    <location>
        <position position="385"/>
    </location>
    <ligand>
        <name>Fe cation</name>
        <dbReference type="ChEBI" id="CHEBI:24875"/>
        <note>catalytic</note>
    </ligand>
</feature>
<feature type="splice variant" id="VSP_062513" description="In isoform C.">
    <location>
        <begin position="92"/>
        <end position="98"/>
    </location>
</feature>
<gene>
    <name evidence="7" type="primary">JMJD5</name>
    <name evidence="7" type="synonym">Kdm8</name>
    <name evidence="7" type="ORF">CG13902</name>
</gene>
<reference evidence="8" key="1">
    <citation type="journal article" date="2000" name="Science">
        <title>The genome sequence of Drosophila melanogaster.</title>
        <authorList>
            <person name="Adams M.D."/>
            <person name="Celniker S.E."/>
            <person name="Holt R.A."/>
            <person name="Evans C.A."/>
            <person name="Gocayne J.D."/>
            <person name="Amanatides P.G."/>
            <person name="Scherer S.E."/>
            <person name="Li P.W."/>
            <person name="Hoskins R.A."/>
            <person name="Galle R.F."/>
            <person name="George R.A."/>
            <person name="Lewis S.E."/>
            <person name="Richards S."/>
            <person name="Ashburner M."/>
            <person name="Henderson S.N."/>
            <person name="Sutton G.G."/>
            <person name="Wortman J.R."/>
            <person name="Yandell M.D."/>
            <person name="Zhang Q."/>
            <person name="Chen L.X."/>
            <person name="Brandon R.C."/>
            <person name="Rogers Y.-H.C."/>
            <person name="Blazej R.G."/>
            <person name="Champe M."/>
            <person name="Pfeiffer B.D."/>
            <person name="Wan K.H."/>
            <person name="Doyle C."/>
            <person name="Baxter E.G."/>
            <person name="Helt G."/>
            <person name="Nelson C.R."/>
            <person name="Miklos G.L.G."/>
            <person name="Abril J.F."/>
            <person name="Agbayani A."/>
            <person name="An H.-J."/>
            <person name="Andrews-Pfannkoch C."/>
            <person name="Baldwin D."/>
            <person name="Ballew R.M."/>
            <person name="Basu A."/>
            <person name="Baxendale J."/>
            <person name="Bayraktaroglu L."/>
            <person name="Beasley E.M."/>
            <person name="Beeson K.Y."/>
            <person name="Benos P.V."/>
            <person name="Berman B.P."/>
            <person name="Bhandari D."/>
            <person name="Bolshakov S."/>
            <person name="Borkova D."/>
            <person name="Botchan M.R."/>
            <person name="Bouck J."/>
            <person name="Brokstein P."/>
            <person name="Brottier P."/>
            <person name="Burtis K.C."/>
            <person name="Busam D.A."/>
            <person name="Butler H."/>
            <person name="Cadieu E."/>
            <person name="Center A."/>
            <person name="Chandra I."/>
            <person name="Cherry J.M."/>
            <person name="Cawley S."/>
            <person name="Dahlke C."/>
            <person name="Davenport L.B."/>
            <person name="Davies P."/>
            <person name="de Pablos B."/>
            <person name="Delcher A."/>
            <person name="Deng Z."/>
            <person name="Mays A.D."/>
            <person name="Dew I."/>
            <person name="Dietz S.M."/>
            <person name="Dodson K."/>
            <person name="Doup L.E."/>
            <person name="Downes M."/>
            <person name="Dugan-Rocha S."/>
            <person name="Dunkov B.C."/>
            <person name="Dunn P."/>
            <person name="Durbin K.J."/>
            <person name="Evangelista C.C."/>
            <person name="Ferraz C."/>
            <person name="Ferriera S."/>
            <person name="Fleischmann W."/>
            <person name="Fosler C."/>
            <person name="Gabrielian A.E."/>
            <person name="Garg N.S."/>
            <person name="Gelbart W.M."/>
            <person name="Glasser K."/>
            <person name="Glodek A."/>
            <person name="Gong F."/>
            <person name="Gorrell J.H."/>
            <person name="Gu Z."/>
            <person name="Guan P."/>
            <person name="Harris M."/>
            <person name="Harris N.L."/>
            <person name="Harvey D.A."/>
            <person name="Heiman T.J."/>
            <person name="Hernandez J.R."/>
            <person name="Houck J."/>
            <person name="Hostin D."/>
            <person name="Houston K.A."/>
            <person name="Howland T.J."/>
            <person name="Wei M.-H."/>
            <person name="Ibegwam C."/>
            <person name="Jalali M."/>
            <person name="Kalush F."/>
            <person name="Karpen G.H."/>
            <person name="Ke Z."/>
            <person name="Kennison J.A."/>
            <person name="Ketchum K.A."/>
            <person name="Kimmel B.E."/>
            <person name="Kodira C.D."/>
            <person name="Kraft C.L."/>
            <person name="Kravitz S."/>
            <person name="Kulp D."/>
            <person name="Lai Z."/>
            <person name="Lasko P."/>
            <person name="Lei Y."/>
            <person name="Levitsky A.A."/>
            <person name="Li J.H."/>
            <person name="Li Z."/>
            <person name="Liang Y."/>
            <person name="Lin X."/>
            <person name="Liu X."/>
            <person name="Mattei B."/>
            <person name="McIntosh T.C."/>
            <person name="McLeod M.P."/>
            <person name="McPherson D."/>
            <person name="Merkulov G."/>
            <person name="Milshina N.V."/>
            <person name="Mobarry C."/>
            <person name="Morris J."/>
            <person name="Moshrefi A."/>
            <person name="Mount S.M."/>
            <person name="Moy M."/>
            <person name="Murphy B."/>
            <person name="Murphy L."/>
            <person name="Muzny D.M."/>
            <person name="Nelson D.L."/>
            <person name="Nelson D.R."/>
            <person name="Nelson K.A."/>
            <person name="Nixon K."/>
            <person name="Nusskern D.R."/>
            <person name="Pacleb J.M."/>
            <person name="Palazzolo M."/>
            <person name="Pittman G.S."/>
            <person name="Pan S."/>
            <person name="Pollard J."/>
            <person name="Puri V."/>
            <person name="Reese M.G."/>
            <person name="Reinert K."/>
            <person name="Remington K."/>
            <person name="Saunders R.D.C."/>
            <person name="Scheeler F."/>
            <person name="Shen H."/>
            <person name="Shue B.C."/>
            <person name="Siden-Kiamos I."/>
            <person name="Simpson M."/>
            <person name="Skupski M.P."/>
            <person name="Smith T.J."/>
            <person name="Spier E."/>
            <person name="Spradling A.C."/>
            <person name="Stapleton M."/>
            <person name="Strong R."/>
            <person name="Sun E."/>
            <person name="Svirskas R."/>
            <person name="Tector C."/>
            <person name="Turner R."/>
            <person name="Venter E."/>
            <person name="Wang A.H."/>
            <person name="Wang X."/>
            <person name="Wang Z.-Y."/>
            <person name="Wassarman D.A."/>
            <person name="Weinstock G.M."/>
            <person name="Weissenbach J."/>
            <person name="Williams S.M."/>
            <person name="Woodage T."/>
            <person name="Worley K.C."/>
            <person name="Wu D."/>
            <person name="Yang S."/>
            <person name="Yao Q.A."/>
            <person name="Ye J."/>
            <person name="Yeh R.-F."/>
            <person name="Zaveri J.S."/>
            <person name="Zhan M."/>
            <person name="Zhang G."/>
            <person name="Zhao Q."/>
            <person name="Zheng L."/>
            <person name="Zheng X.H."/>
            <person name="Zhong F.N."/>
            <person name="Zhong W."/>
            <person name="Zhou X."/>
            <person name="Zhu S.C."/>
            <person name="Zhu X."/>
            <person name="Smith H.O."/>
            <person name="Gibbs R.A."/>
            <person name="Myers E.W."/>
            <person name="Rubin G.M."/>
            <person name="Venter J.C."/>
        </authorList>
    </citation>
    <scope>NUCLEOTIDE SEQUENCE [LARGE SCALE GENOMIC DNA]</scope>
    <source>
        <strain evidence="8">Berkeley</strain>
    </source>
</reference>
<reference evidence="8" key="2">
    <citation type="journal article" date="2002" name="Genome Biol.">
        <title>Annotation of the Drosophila melanogaster euchromatic genome: a systematic review.</title>
        <authorList>
            <person name="Misra S."/>
            <person name="Crosby M.A."/>
            <person name="Mungall C.J."/>
            <person name="Matthews B.B."/>
            <person name="Campbell K.S."/>
            <person name="Hradecky P."/>
            <person name="Huang Y."/>
            <person name="Kaminker J.S."/>
            <person name="Millburn G.H."/>
            <person name="Prochnik S.E."/>
            <person name="Smith C.D."/>
            <person name="Tupy J.L."/>
            <person name="Whitfield E.J."/>
            <person name="Bayraktaroglu L."/>
            <person name="Berman B.P."/>
            <person name="Bettencourt B.R."/>
            <person name="Celniker S.E."/>
            <person name="de Grey A.D.N.J."/>
            <person name="Drysdale R.A."/>
            <person name="Harris N.L."/>
            <person name="Richter J."/>
            <person name="Russo S."/>
            <person name="Schroeder A.J."/>
            <person name="Shu S.Q."/>
            <person name="Stapleton M."/>
            <person name="Yamada C."/>
            <person name="Ashburner M."/>
            <person name="Gelbart W.M."/>
            <person name="Rubin G.M."/>
            <person name="Lewis S.E."/>
        </authorList>
    </citation>
    <scope>GENOME REANNOTATION</scope>
    <source>
        <strain evidence="8">Berkeley</strain>
    </source>
</reference>
<reference evidence="6" key="3">
    <citation type="submission" date="2003-02" db="EMBL/GenBank/DDBJ databases">
        <authorList>
            <person name="Stapleton M."/>
            <person name="Brokstein P."/>
            <person name="Hong L."/>
            <person name="Agbayani A."/>
            <person name="Carlson J."/>
            <person name="Champe M."/>
            <person name="Chavez C."/>
            <person name="Dorsett V."/>
            <person name="Dresnek D."/>
            <person name="Farfan D."/>
            <person name="Frise E."/>
            <person name="George R."/>
            <person name="Gonzalez M."/>
            <person name="Guarin H."/>
            <person name="Kronmiller B."/>
            <person name="Li P."/>
            <person name="Liao G."/>
            <person name="Miranda A."/>
            <person name="Mungall C.J."/>
            <person name="Nunoo J."/>
            <person name="Pacleb J."/>
            <person name="Paragas V."/>
            <person name="Park S."/>
            <person name="Patel S."/>
            <person name="Phouanenavong S."/>
            <person name="Wan K."/>
            <person name="Yu C."/>
            <person name="Lewis S.E."/>
            <person name="Rubin G.M."/>
            <person name="Celniker S."/>
        </authorList>
    </citation>
    <scope>NUCLEOTIDE SEQUENCE [LARGE SCALE MRNA]</scope>
</reference>
<reference evidence="5" key="4">
    <citation type="journal article" date="2017" name="Sci. Rep.">
        <title>Systematic discovery of genetic modulation by Jumonji histone demethylases in Drosophila.</title>
        <authorList>
            <person name="Shalaby N.A."/>
            <person name="Sayed R."/>
            <person name="Zhang Q."/>
            <person name="Scoggin S."/>
            <person name="Eliazer S."/>
            <person name="Rothenfluh A."/>
            <person name="Buszczak M."/>
        </authorList>
    </citation>
    <scope>SUBCELLULAR LOCATION</scope>
    <scope>DISRUPTION PHENOTYPE</scope>
</reference>
<reference evidence="5" key="5">
    <citation type="journal article" date="2018" name="Sci. Rep.">
        <title>JmjC domain proteins modulate circadian behaviors and sleep in Drosophila.</title>
        <authorList>
            <person name="Shalaby N.A."/>
            <person name="Pinzon J.H."/>
            <person name="Narayanan A.S."/>
            <person name="Jin E.J."/>
            <person name="Ritz M.P."/>
            <person name="Dove R.J."/>
            <person name="Wolfenberg H."/>
            <person name="Rodan A.R."/>
            <person name="Buszczak M."/>
            <person name="Rothenfluh A."/>
        </authorList>
    </citation>
    <scope>FUNCTION</scope>
    <scope>SUBCELLULAR LOCATION</scope>
    <scope>TISSUE SPECIFICITY</scope>
    <scope>DISRUPTION PHENOTYPE</scope>
</reference>
<keyword id="KW-0025">Alternative splicing</keyword>
<keyword id="KW-0963">Cytoplasm</keyword>
<keyword id="KW-0378">Hydrolase</keyword>
<keyword id="KW-0408">Iron</keyword>
<keyword id="KW-0479">Metal-binding</keyword>
<keyword id="KW-0539">Nucleus</keyword>
<keyword id="KW-0560">Oxidoreductase</keyword>
<keyword id="KW-1185">Reference proteome</keyword>
<dbReference type="EC" id="1.14.11.73" evidence="1"/>
<dbReference type="EC" id="3.4.-.-" evidence="1"/>
<dbReference type="EMBL" id="AE014296">
    <property type="protein sequence ID" value="AGB93920.1"/>
    <property type="molecule type" value="Genomic_DNA"/>
</dbReference>
<dbReference type="EMBL" id="AE014296">
    <property type="protein sequence ID" value="AAF47420.2"/>
    <property type="molecule type" value="Genomic_DNA"/>
</dbReference>
<dbReference type="EMBL" id="BT003596">
    <property type="protein sequence ID" value="AAO39599.1"/>
    <property type="molecule type" value="mRNA"/>
</dbReference>
<dbReference type="RefSeq" id="NP_001261225.1">
    <molecule id="Q9W0M3-2"/>
    <property type="nucleotide sequence ID" value="NM_001274296.1"/>
</dbReference>
<dbReference type="RefSeq" id="NP_612063.2">
    <molecule id="Q9W0M3-1"/>
    <property type="nucleotide sequence ID" value="NM_138219.3"/>
</dbReference>
<dbReference type="SMR" id="Q9W0M3"/>
<dbReference type="FunCoup" id="Q9W0M3">
    <property type="interactions" value="658"/>
</dbReference>
<dbReference type="IntAct" id="Q9W0M3">
    <property type="interactions" value="1"/>
</dbReference>
<dbReference type="STRING" id="7227.FBpp0289936"/>
<dbReference type="PaxDb" id="7227-FBpp0289936"/>
<dbReference type="DNASU" id="38097"/>
<dbReference type="EnsemblMetazoa" id="FBtr0300712">
    <molecule id="Q9W0M3-1"/>
    <property type="protein sequence ID" value="FBpp0289936"/>
    <property type="gene ID" value="FBgn0035166"/>
</dbReference>
<dbReference type="EnsemblMetazoa" id="FBtr0331402">
    <molecule id="Q9W0M3-2"/>
    <property type="protein sequence ID" value="FBpp0303819"/>
    <property type="gene ID" value="FBgn0035166"/>
</dbReference>
<dbReference type="GeneID" id="38097"/>
<dbReference type="KEGG" id="dme:Dmel_CG13902"/>
<dbReference type="UCSC" id="CG13902-RA">
    <molecule id="Q9W0M3-1"/>
    <property type="organism name" value="d. melanogaster"/>
</dbReference>
<dbReference type="AGR" id="FB:FBgn0035166"/>
<dbReference type="CTD" id="38097"/>
<dbReference type="FlyBase" id="FBgn0035166">
    <property type="gene designation" value="JMJD5"/>
</dbReference>
<dbReference type="VEuPathDB" id="VectorBase:FBgn0035166"/>
<dbReference type="eggNOG" id="KOG2132">
    <property type="taxonomic scope" value="Eukaryota"/>
</dbReference>
<dbReference type="GeneTree" id="ENSGT00940000158074"/>
<dbReference type="HOGENOM" id="CLU_016785_0_3_1"/>
<dbReference type="InParanoid" id="Q9W0M3"/>
<dbReference type="OMA" id="IGCYFKI"/>
<dbReference type="OrthoDB" id="11696at2759"/>
<dbReference type="Reactome" id="R-DME-9629569">
    <property type="pathway name" value="Protein hydroxylation"/>
</dbReference>
<dbReference type="BioGRID-ORCS" id="38097">
    <property type="hits" value="0 hits in 1 CRISPR screen"/>
</dbReference>
<dbReference type="Proteomes" id="UP000000803">
    <property type="component" value="Chromosome 3L"/>
</dbReference>
<dbReference type="Bgee" id="FBgn0035166">
    <property type="expression patterns" value="Expressed in midgut large flat cell (Drosophila) in digestive tract and 52 other cell types or tissues"/>
</dbReference>
<dbReference type="ExpressionAtlas" id="Q9W0M3">
    <property type="expression patterns" value="baseline and differential"/>
</dbReference>
<dbReference type="GO" id="GO:0005737">
    <property type="term" value="C:cytoplasm"/>
    <property type="evidence" value="ECO:0000314"/>
    <property type="project" value="FlyBase"/>
</dbReference>
<dbReference type="GO" id="GO:0005654">
    <property type="term" value="C:nucleoplasm"/>
    <property type="evidence" value="ECO:0007669"/>
    <property type="project" value="UniProtKB-SubCell"/>
</dbReference>
<dbReference type="GO" id="GO:0005634">
    <property type="term" value="C:nucleus"/>
    <property type="evidence" value="ECO:0000250"/>
    <property type="project" value="FlyBase"/>
</dbReference>
<dbReference type="GO" id="GO:0003682">
    <property type="term" value="F:chromatin binding"/>
    <property type="evidence" value="ECO:0000250"/>
    <property type="project" value="FlyBase"/>
</dbReference>
<dbReference type="GO" id="GO:0051864">
    <property type="term" value="F:histone H3K36 demethylase activity"/>
    <property type="evidence" value="ECO:0000250"/>
    <property type="project" value="FlyBase"/>
</dbReference>
<dbReference type="GO" id="GO:0140680">
    <property type="term" value="F:histone H3K36me/H3K36me2 demethylase activity"/>
    <property type="evidence" value="ECO:0007669"/>
    <property type="project" value="UniProtKB-EC"/>
</dbReference>
<dbReference type="GO" id="GO:0046872">
    <property type="term" value="F:metal ion binding"/>
    <property type="evidence" value="ECO:0007669"/>
    <property type="project" value="UniProtKB-KW"/>
</dbReference>
<dbReference type="GO" id="GO:0106157">
    <property type="term" value="F:peptidyl-arginine 3-dioxygenase activity"/>
    <property type="evidence" value="ECO:0000318"/>
    <property type="project" value="GO_Central"/>
</dbReference>
<dbReference type="GO" id="GO:0048512">
    <property type="term" value="P:circadian behavior"/>
    <property type="evidence" value="ECO:0000315"/>
    <property type="project" value="UniProtKB"/>
</dbReference>
<dbReference type="GO" id="GO:0000086">
    <property type="term" value="P:G2/M transition of mitotic cell cycle"/>
    <property type="evidence" value="ECO:0000250"/>
    <property type="project" value="FlyBase"/>
</dbReference>
<dbReference type="GO" id="GO:0045892">
    <property type="term" value="P:negative regulation of DNA-templated transcription"/>
    <property type="evidence" value="ECO:0000318"/>
    <property type="project" value="GO_Central"/>
</dbReference>
<dbReference type="GO" id="GO:0048511">
    <property type="term" value="P:rhythmic process"/>
    <property type="evidence" value="ECO:0007669"/>
    <property type="project" value="UniProtKB-KW"/>
</dbReference>
<dbReference type="FunFam" id="2.60.120.650:FF:000052">
    <property type="entry name" value="Predicted protein"/>
    <property type="match status" value="1"/>
</dbReference>
<dbReference type="Gene3D" id="2.60.120.650">
    <property type="entry name" value="Cupin"/>
    <property type="match status" value="1"/>
</dbReference>
<dbReference type="InterPro" id="IPR041667">
    <property type="entry name" value="Cupin_8"/>
</dbReference>
<dbReference type="InterPro" id="IPR003347">
    <property type="entry name" value="JmjC_dom"/>
</dbReference>
<dbReference type="PANTHER" id="PTHR12461:SF106">
    <property type="entry name" value="BIFUNCTIONAL PEPTIDASE AND ARGINYL-HYDROXYLASE JMJD5"/>
    <property type="match status" value="1"/>
</dbReference>
<dbReference type="PANTHER" id="PTHR12461">
    <property type="entry name" value="HYPOXIA-INDUCIBLE FACTOR 1 ALPHA INHIBITOR-RELATED"/>
    <property type="match status" value="1"/>
</dbReference>
<dbReference type="Pfam" id="PF13621">
    <property type="entry name" value="Cupin_8"/>
    <property type="match status" value="1"/>
</dbReference>
<dbReference type="SMART" id="SM00558">
    <property type="entry name" value="JmjC"/>
    <property type="match status" value="1"/>
</dbReference>
<dbReference type="SUPFAM" id="SSF51197">
    <property type="entry name" value="Clavaminate synthase-like"/>
    <property type="match status" value="1"/>
</dbReference>
<dbReference type="PROSITE" id="PS51184">
    <property type="entry name" value="JMJC"/>
    <property type="match status" value="1"/>
</dbReference>
<evidence type="ECO:0000250" key="1">
    <source>
        <dbReference type="UniProtKB" id="Q8N371"/>
    </source>
</evidence>
<evidence type="ECO:0000255" key="2">
    <source>
        <dbReference type="PROSITE-ProRule" id="PRU00538"/>
    </source>
</evidence>
<evidence type="ECO:0000269" key="3">
    <source>
    </source>
</evidence>
<evidence type="ECO:0000269" key="4">
    <source>
    </source>
</evidence>
<evidence type="ECO:0000305" key="5"/>
<evidence type="ECO:0000312" key="6">
    <source>
        <dbReference type="EMBL" id="AAO39599.1"/>
    </source>
</evidence>
<evidence type="ECO:0000312" key="7">
    <source>
        <dbReference type="FlyBase" id="FBgn0035166"/>
    </source>
</evidence>
<evidence type="ECO:0000312" key="8">
    <source>
        <dbReference type="Proteomes" id="UP000000803"/>
    </source>
</evidence>
<name>KDM8_DROME</name>
<accession>Q9W0M3</accession>
<accession>M9PDS1</accession>
<accession>Q86NX2</accession>
<proteinExistence type="evidence at transcript level"/>
<comment type="function">
    <text evidence="1 4">Bifunctional enzyme that acts both as an endopeptidase and 2-oxoglutarate-dependent monooxygenase (By similarity). May be involved in regulation of behavior and circadian rhythms (PubMed:29339751).</text>
</comment>
<comment type="catalytic activity">
    <reaction evidence="1">
        <text>L-arginyl-[protein] + 2-oxoglutarate + O2 = (3R)-3-hydroxy-L-arginyl-[protein] + succinate + CO2</text>
        <dbReference type="Rhea" id="RHEA:56744"/>
        <dbReference type="Rhea" id="RHEA-COMP:10532"/>
        <dbReference type="Rhea" id="RHEA-COMP:14712"/>
        <dbReference type="ChEBI" id="CHEBI:15379"/>
        <dbReference type="ChEBI" id="CHEBI:16526"/>
        <dbReference type="ChEBI" id="CHEBI:16810"/>
        <dbReference type="ChEBI" id="CHEBI:29965"/>
        <dbReference type="ChEBI" id="CHEBI:30031"/>
        <dbReference type="ChEBI" id="CHEBI:78294"/>
        <dbReference type="EC" id="1.14.11.73"/>
    </reaction>
</comment>
<comment type="cofactor">
    <cofactor evidence="1">
        <name>Fe(2+)</name>
        <dbReference type="ChEBI" id="CHEBI:29033"/>
    </cofactor>
    <text evidence="1">Binds 1 Fe(2+) ion per subunit.</text>
</comment>
<comment type="subcellular location">
    <subcellularLocation>
        <location evidence="3 4">Nucleus</location>
    </subcellularLocation>
    <subcellularLocation>
        <location evidence="3">Nucleus</location>
        <location evidence="3">Nucleoplasm</location>
    </subcellularLocation>
    <subcellularLocation>
        <location evidence="3">Cytoplasm</location>
    </subcellularLocation>
</comment>
<comment type="alternative products">
    <event type="alternative splicing"/>
    <isoform>
        <id>Q9W0M3-1</id>
        <name evidence="7">B</name>
        <sequence type="displayed"/>
    </isoform>
    <isoform>
        <id>Q9W0M3-2</id>
        <name evidence="7">C</name>
        <sequence type="described" ref="VSP_062513"/>
    </isoform>
</comment>
<comment type="tissue specificity">
    <text evidence="4">Expressed in neurons close to the dorsal lateral neurons involved in circadian rhythm.</text>
</comment>
<comment type="disruption phenotype">
    <text evidence="3 4">Viable (PubMed:28701701). Adults have circadian rhythms with reduced period length and increased rhythm power (PubMed:29339751). Adults also display increased daytime activity and reduced daytime sleep (PubMed:29339751).</text>
</comment>
<protein>
    <recommendedName>
        <fullName evidence="5">Jumonji C domain-containing protein 5</fullName>
        <ecNumber evidence="1">1.14.11.73</ecNumber>
        <ecNumber evidence="1">3.4.-.-</ecNumber>
    </recommendedName>
    <alternativeName>
        <fullName evidence="5">Lysine-specific demethylase 8</fullName>
    </alternativeName>
</protein>
<sequence length="401" mass="45199">MDSEFLELTQLLPRWVDLENVVRGEVEARYILKRAADHLANLRSGGDSGAEETGYLVGALVDRNWERIHTGHFSQVPLVTRKIYAIACCFKIFFLLLESTSPAQKDACSEILDEAQLLGCMEDWSELKVALMDYLDKDGAVALNSAPLPTLEPLTRVTSNCDIPQLDAPSLEEFQTKCFEAGQPTLLLNTIQHWPALHKWLDLNYLLQVAGNRTVPIEIGSNYASDEWSQQLVKIRDFLSRQFGKEPSKAGQNIEYLAQHELFAQIPALKEDISIPDYCTISNEDTPGAVDIKAWLGPAGTVSPMHYDPKHNLLCQVFGSKRIILAAPADTDNLYPHDSEFLANTARIDAAQLDPETYPLVAKVKFYQLLLQPGDCLYMPPKWWHYVRSEAPSFSVSFWWE</sequence>